<evidence type="ECO:0000250" key="1"/>
<evidence type="ECO:0000250" key="2">
    <source>
        <dbReference type="UniProtKB" id="P01241"/>
    </source>
</evidence>
<evidence type="ECO:0000305" key="3"/>
<comment type="function">
    <text>Plays an important role in growth control. Its major role in stimulating body growth is to stimulate the liver and other tissues to secrete IGF1. It stimulates both the differentiation and proliferation of myoblasts. It also stimulates amino acid uptake and protein synthesis in muscle and other tissues.</text>
</comment>
<comment type="subcellular location">
    <subcellularLocation>
        <location>Secreted</location>
    </subcellularLocation>
</comment>
<comment type="similarity">
    <text evidence="3">Belongs to the somatotropin/prolactin family.</text>
</comment>
<protein>
    <recommendedName>
        <fullName>Somatotropin</fullName>
    </recommendedName>
    <alternativeName>
        <fullName>Growth hormone</fullName>
    </alternativeName>
</protein>
<accession>P37886</accession>
<gene>
    <name type="primary">GH1</name>
    <name type="synonym">GH</name>
</gene>
<feature type="signal peptide" evidence="1">
    <location>
        <begin position="1"/>
        <end position="26"/>
    </location>
</feature>
<feature type="chain" id="PRO_0000032990" description="Somatotropin">
    <location>
        <begin position="27"/>
        <end position="216"/>
    </location>
</feature>
<feature type="binding site" evidence="1">
    <location>
        <position position="45"/>
    </location>
    <ligand>
        <name>Zn(2+)</name>
        <dbReference type="ChEBI" id="CHEBI:29105"/>
    </ligand>
</feature>
<feature type="binding site" evidence="1">
    <location>
        <position position="198"/>
    </location>
    <ligand>
        <name>Zn(2+)</name>
        <dbReference type="ChEBI" id="CHEBI:29105"/>
    </ligand>
</feature>
<feature type="modified residue" description="Phosphoserine" evidence="2">
    <location>
        <position position="131"/>
    </location>
</feature>
<feature type="disulfide bond" evidence="1">
    <location>
        <begin position="78"/>
        <end position="189"/>
    </location>
</feature>
<feature type="disulfide bond" evidence="1">
    <location>
        <begin position="206"/>
        <end position="214"/>
    </location>
</feature>
<name>SOMA_MESAU</name>
<reference key="1">
    <citation type="journal article" date="1991" name="Endocrinology">
        <title>Sequence and expression of hamster prolactin and growth hormone messenger RNAs.</title>
        <authorList>
            <person name="Southard J.N."/>
            <person name="Sanchez-Jimenez F."/>
            <person name="Campbell G.T."/>
            <person name="Talamantes F."/>
        </authorList>
    </citation>
    <scope>NUCLEOTIDE SEQUENCE [MRNA]</scope>
</reference>
<dbReference type="EMBL" id="S66299">
    <property type="protein sequence ID" value="AAB20368.1"/>
    <property type="molecule type" value="mRNA"/>
</dbReference>
<dbReference type="PIR" id="B49159">
    <property type="entry name" value="B49159"/>
</dbReference>
<dbReference type="RefSeq" id="NP_001268544.1">
    <property type="nucleotide sequence ID" value="NM_001281615.1"/>
</dbReference>
<dbReference type="SMR" id="P37886"/>
<dbReference type="STRING" id="10036.ENSMAUP00000003112"/>
<dbReference type="GeneID" id="101843583"/>
<dbReference type="KEGG" id="maua:101843583"/>
<dbReference type="CTD" id="2688"/>
<dbReference type="eggNOG" id="ENOG502R5GJ">
    <property type="taxonomic scope" value="Eukaryota"/>
</dbReference>
<dbReference type="OrthoDB" id="9925773at2759"/>
<dbReference type="Proteomes" id="UP000189706">
    <property type="component" value="Unplaced"/>
</dbReference>
<dbReference type="GO" id="GO:0005615">
    <property type="term" value="C:extracellular space"/>
    <property type="evidence" value="ECO:0007669"/>
    <property type="project" value="InterPro"/>
</dbReference>
<dbReference type="GO" id="GO:0008083">
    <property type="term" value="F:growth factor activity"/>
    <property type="evidence" value="ECO:0007669"/>
    <property type="project" value="TreeGrafter"/>
</dbReference>
<dbReference type="GO" id="GO:0005131">
    <property type="term" value="F:growth hormone receptor binding"/>
    <property type="evidence" value="ECO:0007669"/>
    <property type="project" value="InterPro"/>
</dbReference>
<dbReference type="GO" id="GO:0005179">
    <property type="term" value="F:hormone activity"/>
    <property type="evidence" value="ECO:0007669"/>
    <property type="project" value="UniProtKB-KW"/>
</dbReference>
<dbReference type="GO" id="GO:0046872">
    <property type="term" value="F:metal ion binding"/>
    <property type="evidence" value="ECO:0007669"/>
    <property type="project" value="UniProtKB-KW"/>
</dbReference>
<dbReference type="GO" id="GO:0048513">
    <property type="term" value="P:animal organ development"/>
    <property type="evidence" value="ECO:0007669"/>
    <property type="project" value="TreeGrafter"/>
</dbReference>
<dbReference type="GO" id="GO:0060396">
    <property type="term" value="P:growth hormone receptor signaling pathway"/>
    <property type="evidence" value="ECO:0007669"/>
    <property type="project" value="TreeGrafter"/>
</dbReference>
<dbReference type="GO" id="GO:0045927">
    <property type="term" value="P:positive regulation of growth"/>
    <property type="evidence" value="ECO:0007669"/>
    <property type="project" value="TreeGrafter"/>
</dbReference>
<dbReference type="GO" id="GO:0046427">
    <property type="term" value="P:positive regulation of receptor signaling pathway via JAK-STAT"/>
    <property type="evidence" value="ECO:0007669"/>
    <property type="project" value="TreeGrafter"/>
</dbReference>
<dbReference type="GO" id="GO:0031667">
    <property type="term" value="P:response to nutrient levels"/>
    <property type="evidence" value="ECO:0007669"/>
    <property type="project" value="TreeGrafter"/>
</dbReference>
<dbReference type="CDD" id="cd10285">
    <property type="entry name" value="somatotropin_like"/>
    <property type="match status" value="1"/>
</dbReference>
<dbReference type="FunFam" id="1.20.1250.10:FF:000002">
    <property type="entry name" value="Growth hormone"/>
    <property type="match status" value="1"/>
</dbReference>
<dbReference type="Gene3D" id="1.20.1250.10">
    <property type="match status" value="1"/>
</dbReference>
<dbReference type="InterPro" id="IPR009079">
    <property type="entry name" value="4_helix_cytokine-like_core"/>
</dbReference>
<dbReference type="InterPro" id="IPR034975">
    <property type="entry name" value="Somatotropin"/>
</dbReference>
<dbReference type="InterPro" id="IPR001400">
    <property type="entry name" value="Somatotropin/Prolactin"/>
</dbReference>
<dbReference type="InterPro" id="IPR018116">
    <property type="entry name" value="Somatotropin_CS"/>
</dbReference>
<dbReference type="PANTHER" id="PTHR11417:SF2">
    <property type="entry name" value="SOMATOTROPIN"/>
    <property type="match status" value="1"/>
</dbReference>
<dbReference type="PANTHER" id="PTHR11417">
    <property type="entry name" value="SOMATOTROPIN,PROLACTIN"/>
    <property type="match status" value="1"/>
</dbReference>
<dbReference type="Pfam" id="PF00103">
    <property type="entry name" value="Hormone_1"/>
    <property type="match status" value="1"/>
</dbReference>
<dbReference type="PRINTS" id="PR00836">
    <property type="entry name" value="SOMATOTROPIN"/>
</dbReference>
<dbReference type="SUPFAM" id="SSF47266">
    <property type="entry name" value="4-helical cytokines"/>
    <property type="match status" value="1"/>
</dbReference>
<dbReference type="PROSITE" id="PS00266">
    <property type="entry name" value="SOMATOTROPIN_1"/>
    <property type="match status" value="1"/>
</dbReference>
<dbReference type="PROSITE" id="PS00338">
    <property type="entry name" value="SOMATOTROPIN_2"/>
    <property type="match status" value="1"/>
</dbReference>
<proteinExistence type="evidence at transcript level"/>
<organism>
    <name type="scientific">Mesocricetus auratus</name>
    <name type="common">Golden hamster</name>
    <dbReference type="NCBI Taxonomy" id="10036"/>
    <lineage>
        <taxon>Eukaryota</taxon>
        <taxon>Metazoa</taxon>
        <taxon>Chordata</taxon>
        <taxon>Craniata</taxon>
        <taxon>Vertebrata</taxon>
        <taxon>Euteleostomi</taxon>
        <taxon>Mammalia</taxon>
        <taxon>Eutheria</taxon>
        <taxon>Euarchontoglires</taxon>
        <taxon>Glires</taxon>
        <taxon>Rodentia</taxon>
        <taxon>Myomorpha</taxon>
        <taxon>Muroidea</taxon>
        <taxon>Cricetidae</taxon>
        <taxon>Cricetinae</taxon>
        <taxon>Mesocricetus</taxon>
    </lineage>
</organism>
<sequence length="216" mass="24690">MAADSQTSRLLTFTLLCLLWPQEAGAFPAMPLSSLFANAVLRAQHLHQLAADTYKEFERAYIPEGQRYSIQNAQTAFCFSETIPAPTGKEEAQQRSDMELLRFSLLLIQSWLGPVQFLSRIFTNSLMFGTSDRVYEKLKDLEEGIQALMQELEDGSPRVGQILKQTYDKFDTNMRSDDALLKNYGLLSCFKKDLHKAETYLRVMKCRRFVESSCAF</sequence>
<keyword id="KW-1015">Disulfide bond</keyword>
<keyword id="KW-0372">Hormone</keyword>
<keyword id="KW-0479">Metal-binding</keyword>
<keyword id="KW-0597">Phosphoprotein</keyword>
<keyword id="KW-1185">Reference proteome</keyword>
<keyword id="KW-0964">Secreted</keyword>
<keyword id="KW-0732">Signal</keyword>
<keyword id="KW-0862">Zinc</keyword>